<feature type="chain" id="PRO_0000373644" description="Uncharacterized protein F317L">
    <location>
        <begin position="1"/>
        <end position="317"/>
    </location>
</feature>
<comment type="subcellular location">
    <subcellularLocation>
        <location evidence="1">Virion</location>
    </subcellularLocation>
</comment>
<comment type="induction">
    <text evidence="2">Expressed in the late phase of the viral replicative cycle.</text>
</comment>
<comment type="similarity">
    <text evidence="3">Belongs to the asfivirus F317L family.</text>
</comment>
<name>VF317_ASFB7</name>
<dbReference type="EMBL" id="U18466">
    <property type="protein sequence ID" value="AAA65273.1"/>
    <property type="molecule type" value="Genomic_DNA"/>
</dbReference>
<dbReference type="RefSeq" id="NP_042737.1">
    <property type="nucleotide sequence ID" value="NC_001659.2"/>
</dbReference>
<dbReference type="SMR" id="Q65144"/>
<dbReference type="GeneID" id="22220425"/>
<dbReference type="KEGG" id="vg:22220425"/>
<dbReference type="Proteomes" id="UP000000624">
    <property type="component" value="Segment"/>
</dbReference>
<dbReference type="GO" id="GO:0044423">
    <property type="term" value="C:virion component"/>
    <property type="evidence" value="ECO:0007669"/>
    <property type="project" value="UniProtKB-KW"/>
</dbReference>
<organism>
    <name type="scientific">African swine fever virus (strain Badajoz 1971 Vero-adapted)</name>
    <name type="common">Ba71V</name>
    <name type="synonym">ASFV</name>
    <dbReference type="NCBI Taxonomy" id="10498"/>
    <lineage>
        <taxon>Viruses</taxon>
        <taxon>Varidnaviria</taxon>
        <taxon>Bamfordvirae</taxon>
        <taxon>Nucleocytoviricota</taxon>
        <taxon>Pokkesviricetes</taxon>
        <taxon>Asfuvirales</taxon>
        <taxon>Asfarviridae</taxon>
        <taxon>Asfivirus</taxon>
        <taxon>African swine fever virus</taxon>
    </lineage>
</organism>
<proteinExistence type="evidence at transcript level"/>
<accession>Q65144</accession>
<keyword id="KW-0426">Late protein</keyword>
<keyword id="KW-1185">Reference proteome</keyword>
<keyword id="KW-0946">Virion</keyword>
<organismHost>
    <name type="scientific">Ornithodoros</name>
    <name type="common">relapsing fever ticks</name>
    <dbReference type="NCBI Taxonomy" id="6937"/>
</organismHost>
<organismHost>
    <name type="scientific">Sus scrofa</name>
    <name type="common">Pig</name>
    <dbReference type="NCBI Taxonomy" id="9823"/>
</organismHost>
<reference key="1">
    <citation type="journal article" date="1995" name="Virology">
        <title>Analysis of the complete nucleotide sequence of African swine fever virus.</title>
        <authorList>
            <person name="Yanez R.J."/>
            <person name="Rodriguez J.M."/>
            <person name="Nogal M.L."/>
            <person name="Yuste L."/>
            <person name="Enriquez C."/>
            <person name="Rodriguez J.F."/>
            <person name="Vinuela E."/>
        </authorList>
    </citation>
    <scope>NUCLEOTIDE SEQUENCE [LARGE SCALE GENOMIC DNA]</scope>
</reference>
<reference key="2">
    <citation type="journal article" date="2018" name="J. Virol.">
        <title>A Proteomic Atlas of the African Swine Fever Virus Particle.</title>
        <authorList>
            <person name="Alejo A."/>
            <person name="Matamoros T."/>
            <person name="Guerra M."/>
            <person name="Andres G."/>
        </authorList>
    </citation>
    <scope>SUBCELLULAR LOCATION</scope>
</reference>
<reference key="3">
    <citation type="journal article" date="2020" name="J. Virol.">
        <title>The African Swine Fever Virus Transcriptome.</title>
        <authorList>
            <person name="Cackett G."/>
            <person name="Matelska D."/>
            <person name="Sykora M."/>
            <person name="Portugal R."/>
            <person name="Malecki M."/>
            <person name="Baehler J."/>
            <person name="Dixon L."/>
            <person name="Werner F."/>
        </authorList>
    </citation>
    <scope>INDUCTION</scope>
</reference>
<protein>
    <recommendedName>
        <fullName>Uncharacterized protein F317L</fullName>
        <shortName>pF317L</shortName>
    </recommendedName>
</protein>
<evidence type="ECO:0000269" key="1">
    <source>
    </source>
</evidence>
<evidence type="ECO:0000269" key="2">
    <source>
    </source>
</evidence>
<evidence type="ECO:0000305" key="3"/>
<gene>
    <name type="ordered locus">Ba71V-043</name>
    <name type="ORF">F317L</name>
</gene>
<sequence length="317" mass="36554">MVETQMDKLGFLLNHIGKQVTTKVLSNAHITQTMKEIILENHGVDGGAAKNVSKGKSSPKEKKHWTEFESWEQLSKSKRSFKEYWAERNEIVNTLLLNWDNVRGAIKKFLDDDREWCGRINMINGVPEIVEIIPSPYRAGENIYFGSEAMMPADIYSRVANKPAMFVFHTHPNLGSCCGGMPSICDISTTLRYLLMGWTAGHLIISSNQVGMLTVDKRIIVDLWANENPRWLMAQKILDIFMMLTSRRSLVNPWTLRDLKKILQDYGIEYIIFPSNDFFIYEDERLLMFSKKWTNFFTLHELLDDLETIETKASSTT</sequence>